<name>TOLB_SYNC1</name>
<keyword id="KW-0131">Cell cycle</keyword>
<keyword id="KW-0132">Cell division</keyword>
<keyword id="KW-0574">Periplasm</keyword>
<keyword id="KW-1185">Reference proteome</keyword>
<keyword id="KW-0732">Signal</keyword>
<gene>
    <name evidence="1" type="primary">tolB</name>
    <name type="ordered locus">Pcar_2975</name>
</gene>
<accession>Q3A097</accession>
<dbReference type="EMBL" id="CP000142">
    <property type="protein sequence ID" value="ABA90210.2"/>
    <property type="molecule type" value="Genomic_DNA"/>
</dbReference>
<dbReference type="RefSeq" id="WP_011342762.1">
    <property type="nucleotide sequence ID" value="NC_007498.2"/>
</dbReference>
<dbReference type="SMR" id="Q3A097"/>
<dbReference type="STRING" id="338963.Pcar_2975"/>
<dbReference type="KEGG" id="pca:Pcar_2975"/>
<dbReference type="eggNOG" id="COG0823">
    <property type="taxonomic scope" value="Bacteria"/>
</dbReference>
<dbReference type="HOGENOM" id="CLU_047123_2_0_7"/>
<dbReference type="OrthoDB" id="9815657at2"/>
<dbReference type="Proteomes" id="UP000002534">
    <property type="component" value="Chromosome"/>
</dbReference>
<dbReference type="GO" id="GO:0042597">
    <property type="term" value="C:periplasmic space"/>
    <property type="evidence" value="ECO:0007669"/>
    <property type="project" value="UniProtKB-SubCell"/>
</dbReference>
<dbReference type="GO" id="GO:0051301">
    <property type="term" value="P:cell division"/>
    <property type="evidence" value="ECO:0007669"/>
    <property type="project" value="UniProtKB-KW"/>
</dbReference>
<dbReference type="GO" id="GO:0017038">
    <property type="term" value="P:protein import"/>
    <property type="evidence" value="ECO:0007669"/>
    <property type="project" value="InterPro"/>
</dbReference>
<dbReference type="Gene3D" id="2.120.10.30">
    <property type="entry name" value="TolB, C-terminal domain"/>
    <property type="match status" value="2"/>
</dbReference>
<dbReference type="Gene3D" id="3.40.50.10070">
    <property type="entry name" value="TolB, N-terminal domain"/>
    <property type="match status" value="1"/>
</dbReference>
<dbReference type="HAMAP" id="MF_00671">
    <property type="entry name" value="TolB"/>
    <property type="match status" value="1"/>
</dbReference>
<dbReference type="InterPro" id="IPR011042">
    <property type="entry name" value="6-blade_b-propeller_TolB-like"/>
</dbReference>
<dbReference type="InterPro" id="IPR011659">
    <property type="entry name" value="PD40"/>
</dbReference>
<dbReference type="InterPro" id="IPR014167">
    <property type="entry name" value="Tol-Pal_TolB"/>
</dbReference>
<dbReference type="InterPro" id="IPR007195">
    <property type="entry name" value="TolB_N"/>
</dbReference>
<dbReference type="NCBIfam" id="TIGR02800">
    <property type="entry name" value="propeller_TolB"/>
    <property type="match status" value="1"/>
</dbReference>
<dbReference type="PANTHER" id="PTHR36842:SF1">
    <property type="entry name" value="PROTEIN TOLB"/>
    <property type="match status" value="1"/>
</dbReference>
<dbReference type="PANTHER" id="PTHR36842">
    <property type="entry name" value="PROTEIN TOLB HOMOLOG"/>
    <property type="match status" value="1"/>
</dbReference>
<dbReference type="Pfam" id="PF07676">
    <property type="entry name" value="PD40"/>
    <property type="match status" value="4"/>
</dbReference>
<dbReference type="Pfam" id="PF04052">
    <property type="entry name" value="TolB_N"/>
    <property type="match status" value="1"/>
</dbReference>
<dbReference type="SUPFAM" id="SSF52964">
    <property type="entry name" value="TolB, N-terminal domain"/>
    <property type="match status" value="1"/>
</dbReference>
<dbReference type="SUPFAM" id="SSF69304">
    <property type="entry name" value="Tricorn protease N-terminal domain"/>
    <property type="match status" value="1"/>
</dbReference>
<protein>
    <recommendedName>
        <fullName evidence="1">Tol-Pal system protein TolB</fullName>
    </recommendedName>
</protein>
<feature type="signal peptide" evidence="1">
    <location>
        <begin position="1"/>
        <end position="21"/>
    </location>
</feature>
<feature type="chain" id="PRO_0000259066" description="Tol-Pal system protein TolB" evidence="1">
    <location>
        <begin position="22"/>
        <end position="430"/>
    </location>
</feature>
<proteinExistence type="inferred from homology"/>
<comment type="function">
    <text evidence="1">Part of the Tol-Pal system, which plays a role in outer membrane invagination during cell division and is important for maintaining outer membrane integrity.</text>
</comment>
<comment type="subunit">
    <text evidence="1">The Tol-Pal system is composed of five core proteins: the inner membrane proteins TolA, TolQ and TolR, the periplasmic protein TolB and the outer membrane protein Pal. They form a network linking the inner and outer membranes and the peptidoglycan layer.</text>
</comment>
<comment type="subcellular location">
    <subcellularLocation>
        <location evidence="1">Periplasm</location>
    </subcellularLocation>
</comment>
<comment type="similarity">
    <text evidence="1">Belongs to the TolB family.</text>
</comment>
<evidence type="ECO:0000255" key="1">
    <source>
        <dbReference type="HAMAP-Rule" id="MF_00671"/>
    </source>
</evidence>
<reference key="1">
    <citation type="submission" date="2005-10" db="EMBL/GenBank/DDBJ databases">
        <title>Complete sequence of Pelobacter carbinolicus DSM 2380.</title>
        <authorList>
            <person name="Copeland A."/>
            <person name="Lucas S."/>
            <person name="Lapidus A."/>
            <person name="Barry K."/>
            <person name="Detter J.C."/>
            <person name="Glavina T."/>
            <person name="Hammon N."/>
            <person name="Israni S."/>
            <person name="Pitluck S."/>
            <person name="Chertkov O."/>
            <person name="Schmutz J."/>
            <person name="Larimer F."/>
            <person name="Land M."/>
            <person name="Kyrpides N."/>
            <person name="Ivanova N."/>
            <person name="Richardson P."/>
        </authorList>
    </citation>
    <scope>NUCLEOTIDE SEQUENCE [LARGE SCALE GENOMIC DNA]</scope>
    <source>
        <strain>DSM 2380 / NBRC 103641 / GraBd1</strain>
    </source>
</reference>
<organism>
    <name type="scientific">Syntrophotalea carbinolica (strain DSM 2380 / NBRC 103641 / GraBd1)</name>
    <name type="common">Pelobacter carbinolicus</name>
    <dbReference type="NCBI Taxonomy" id="338963"/>
    <lineage>
        <taxon>Bacteria</taxon>
        <taxon>Pseudomonadati</taxon>
        <taxon>Thermodesulfobacteriota</taxon>
        <taxon>Desulfuromonadia</taxon>
        <taxon>Desulfuromonadales</taxon>
        <taxon>Syntrophotaleaceae</taxon>
        <taxon>Syntrophotalea</taxon>
    </lineage>
</organism>
<sequence>MRRFVTLLIALLCLSATAVQAQVEIRAPGQQTIAVANTQLVPLSGTPLPAIAAELHDVMAADLELSGLFRQLDPAAFLDDARRPGLTSSRVDFNQWALLGAEILIKGGYQLQGERLLVDFRLYDVVHRRLLTGRRYAGLRRDVRTMAHKFADQVLKSVTGREGPFSSRIAYIDNRTGHKELYLMDTDGANALRLTDHRSIVLNPDFSPNGREVIYTSYRRGNPDLYRKQLSTGQEARLAFKKGLNIAARFRPDGREIALTQSATGNPELMLLGTDGSRRRRLTSHWGIDVDPSWSPAGDRLAFVSDRQGNPHIFVMDLLGGQTARLTANGKYNATPAWSPDGKRIAFTRLEKGVFDIYTVRPDGTDERRLTFGPGNKEHPRWSPDSRFLVYSSDQDGRKGIYIMRADGTGIRRISAGGGQCQHPAWSGQR</sequence>